<comment type="function">
    <text evidence="1">ATP-dependent RNA helicase which is a subunit of the eIF4F complex involved in cap recognition and is required for mRNA binding to ribosome. In the current model of translation initiation, eIF4A unwinds RNA secondary structures in the 5'-UTR of mRNAs which is necessary to allow efficient binding of the small ribosomal subunit, and subsequent scanning for the initiator codon (By similarity).</text>
</comment>
<comment type="catalytic activity">
    <reaction>
        <text>ATP + H2O = ADP + phosphate + H(+)</text>
        <dbReference type="Rhea" id="RHEA:13065"/>
        <dbReference type="ChEBI" id="CHEBI:15377"/>
        <dbReference type="ChEBI" id="CHEBI:15378"/>
        <dbReference type="ChEBI" id="CHEBI:30616"/>
        <dbReference type="ChEBI" id="CHEBI:43474"/>
        <dbReference type="ChEBI" id="CHEBI:456216"/>
        <dbReference type="EC" id="3.6.4.13"/>
    </reaction>
</comment>
<comment type="subunit">
    <text evidence="1">eIF4F is a multi-subunit complex, the composition of which varies with external and internal environmental conditions. It is composed of at least EIF4A, EIF4E and EIF4G (By similarity).</text>
</comment>
<comment type="similarity">
    <text evidence="4">Belongs to the DEAD box helicase family. eIF4A subfamily.</text>
</comment>
<name>IF4A7_TOBAC</name>
<feature type="chain" id="PRO_0000054954" description="Eukaryotic initiation factor 4A-7">
    <location>
        <begin position="1"/>
        <end position="413"/>
    </location>
</feature>
<feature type="domain" description="Helicase ATP-binding" evidence="2">
    <location>
        <begin position="71"/>
        <end position="241"/>
    </location>
</feature>
<feature type="domain" description="Helicase C-terminal" evidence="3">
    <location>
        <begin position="252"/>
        <end position="413"/>
    </location>
</feature>
<feature type="short sequence motif" description="Q motif">
    <location>
        <begin position="40"/>
        <end position="68"/>
    </location>
</feature>
<feature type="short sequence motif" description="DEAD box">
    <location>
        <begin position="189"/>
        <end position="192"/>
    </location>
</feature>
<feature type="binding site" evidence="2">
    <location>
        <begin position="84"/>
        <end position="91"/>
    </location>
    <ligand>
        <name>ATP</name>
        <dbReference type="ChEBI" id="CHEBI:30616"/>
    </ligand>
</feature>
<evidence type="ECO:0000250" key="1"/>
<evidence type="ECO:0000255" key="2">
    <source>
        <dbReference type="PROSITE-ProRule" id="PRU00541"/>
    </source>
</evidence>
<evidence type="ECO:0000255" key="3">
    <source>
        <dbReference type="PROSITE-ProRule" id="PRU00542"/>
    </source>
</evidence>
<evidence type="ECO:0000305" key="4"/>
<protein>
    <recommendedName>
        <fullName>Eukaryotic initiation factor 4A-7</fullName>
        <shortName>eIF-4A-7</shortName>
        <ecNumber>3.6.4.13</ecNumber>
    </recommendedName>
    <alternativeName>
        <fullName>ATP-dependent RNA helicase eIF4A-7</fullName>
    </alternativeName>
</protein>
<dbReference type="EC" id="3.6.4.13"/>
<dbReference type="EMBL" id="X79137">
    <property type="protein sequence ID" value="CAA55738.1"/>
    <property type="molecule type" value="mRNA"/>
</dbReference>
<dbReference type="PIR" id="S52019">
    <property type="entry name" value="S52019"/>
</dbReference>
<dbReference type="RefSeq" id="NP_001312302.1">
    <property type="nucleotide sequence ID" value="NM_001325373.1"/>
</dbReference>
<dbReference type="SMR" id="Q40470"/>
<dbReference type="STRING" id="4097.Q40470"/>
<dbReference type="PaxDb" id="4097-Q40470"/>
<dbReference type="GeneID" id="107783883"/>
<dbReference type="KEGG" id="nta:107783883"/>
<dbReference type="OrthoDB" id="1213547at2759"/>
<dbReference type="Proteomes" id="UP000084051">
    <property type="component" value="Unplaced"/>
</dbReference>
<dbReference type="GO" id="GO:0010494">
    <property type="term" value="C:cytoplasmic stress granule"/>
    <property type="evidence" value="ECO:0000318"/>
    <property type="project" value="GO_Central"/>
</dbReference>
<dbReference type="GO" id="GO:0005524">
    <property type="term" value="F:ATP binding"/>
    <property type="evidence" value="ECO:0007669"/>
    <property type="project" value="UniProtKB-KW"/>
</dbReference>
<dbReference type="GO" id="GO:0016887">
    <property type="term" value="F:ATP hydrolysis activity"/>
    <property type="evidence" value="ECO:0007669"/>
    <property type="project" value="RHEA"/>
</dbReference>
<dbReference type="GO" id="GO:0003723">
    <property type="term" value="F:RNA binding"/>
    <property type="evidence" value="ECO:0007669"/>
    <property type="project" value="UniProtKB-KW"/>
</dbReference>
<dbReference type="GO" id="GO:0003724">
    <property type="term" value="F:RNA helicase activity"/>
    <property type="evidence" value="ECO:0007669"/>
    <property type="project" value="UniProtKB-EC"/>
</dbReference>
<dbReference type="GO" id="GO:0003743">
    <property type="term" value="F:translation initiation factor activity"/>
    <property type="evidence" value="ECO:0000318"/>
    <property type="project" value="GO_Central"/>
</dbReference>
<dbReference type="GO" id="GO:0002183">
    <property type="term" value="P:cytoplasmic translational initiation"/>
    <property type="evidence" value="ECO:0000318"/>
    <property type="project" value="GO_Central"/>
</dbReference>
<dbReference type="CDD" id="cd17939">
    <property type="entry name" value="DEADc_EIF4A"/>
    <property type="match status" value="1"/>
</dbReference>
<dbReference type="CDD" id="cd18787">
    <property type="entry name" value="SF2_C_DEAD"/>
    <property type="match status" value="1"/>
</dbReference>
<dbReference type="FunFam" id="3.40.50.300:FF:000089">
    <property type="entry name" value="Eukaryotic initiation factor 4A-II"/>
    <property type="match status" value="1"/>
</dbReference>
<dbReference type="FunFam" id="3.40.50.300:FF:000031">
    <property type="entry name" value="Eukaryotic initiation factor 4A-III"/>
    <property type="match status" value="1"/>
</dbReference>
<dbReference type="Gene3D" id="3.40.50.300">
    <property type="entry name" value="P-loop containing nucleotide triphosphate hydrolases"/>
    <property type="match status" value="2"/>
</dbReference>
<dbReference type="InterPro" id="IPR011545">
    <property type="entry name" value="DEAD/DEAH_box_helicase_dom"/>
</dbReference>
<dbReference type="InterPro" id="IPR014001">
    <property type="entry name" value="Helicase_ATP-bd"/>
</dbReference>
<dbReference type="InterPro" id="IPR001650">
    <property type="entry name" value="Helicase_C-like"/>
</dbReference>
<dbReference type="InterPro" id="IPR027417">
    <property type="entry name" value="P-loop_NTPase"/>
</dbReference>
<dbReference type="InterPro" id="IPR000629">
    <property type="entry name" value="RNA-helicase_DEAD-box_CS"/>
</dbReference>
<dbReference type="InterPro" id="IPR014014">
    <property type="entry name" value="RNA_helicase_DEAD_Q_motif"/>
</dbReference>
<dbReference type="PANTHER" id="PTHR47958">
    <property type="entry name" value="ATP-DEPENDENT RNA HELICASE DBP3"/>
    <property type="match status" value="1"/>
</dbReference>
<dbReference type="Pfam" id="PF00270">
    <property type="entry name" value="DEAD"/>
    <property type="match status" value="1"/>
</dbReference>
<dbReference type="Pfam" id="PF00271">
    <property type="entry name" value="Helicase_C"/>
    <property type="match status" value="1"/>
</dbReference>
<dbReference type="SMART" id="SM00487">
    <property type="entry name" value="DEXDc"/>
    <property type="match status" value="1"/>
</dbReference>
<dbReference type="SMART" id="SM00490">
    <property type="entry name" value="HELICc"/>
    <property type="match status" value="1"/>
</dbReference>
<dbReference type="SUPFAM" id="SSF52540">
    <property type="entry name" value="P-loop containing nucleoside triphosphate hydrolases"/>
    <property type="match status" value="1"/>
</dbReference>
<dbReference type="PROSITE" id="PS00039">
    <property type="entry name" value="DEAD_ATP_HELICASE"/>
    <property type="match status" value="1"/>
</dbReference>
<dbReference type="PROSITE" id="PS51192">
    <property type="entry name" value="HELICASE_ATP_BIND_1"/>
    <property type="match status" value="1"/>
</dbReference>
<dbReference type="PROSITE" id="PS51194">
    <property type="entry name" value="HELICASE_CTER"/>
    <property type="match status" value="1"/>
</dbReference>
<dbReference type="PROSITE" id="PS51195">
    <property type="entry name" value="Q_MOTIF"/>
    <property type="match status" value="1"/>
</dbReference>
<keyword id="KW-0067">ATP-binding</keyword>
<keyword id="KW-0347">Helicase</keyword>
<keyword id="KW-0378">Hydrolase</keyword>
<keyword id="KW-0396">Initiation factor</keyword>
<keyword id="KW-0547">Nucleotide-binding</keyword>
<keyword id="KW-0648">Protein biosynthesis</keyword>
<keyword id="KW-1185">Reference proteome</keyword>
<keyword id="KW-0694">RNA-binding</keyword>
<reference key="1">
    <citation type="journal article" date="1994" name="Plant Mol. Biol.">
        <title>Characterization of the tobacco eIF-4A gene family.</title>
        <authorList>
            <person name="Owttrim G.W."/>
            <person name="Mandel T."/>
            <person name="Trachsel H."/>
            <person name="Thomas A.A."/>
            <person name="Kuhlemeier C."/>
        </authorList>
    </citation>
    <scope>NUCLEOTIDE SEQUENCE [MRNA]</scope>
    <source>
        <strain>cv. SR1</strain>
    </source>
</reference>
<sequence>MAGLAPEGSQFDARQYDAKMTELLGTEQEEFFTSYDEVYDSFDAMGLQENLLRGIYAYGFEKPSAIQQRGIVPFCKGLDVIQQAQSGTGKTATFCSGVLQQLDYSLVECQALVLAPTRELAQQIEKVMRALGDYLGVKVHACVGGTSVREDQRILQSGVHVVVGTPGRVFDMLRRQSLRPDHIKMFVLDEADEMLSRGFKDQIYDIFQLLPPKIQVGVFSATMPPEALEITRKFMNKPVRILVKRDDVTLEGIKQFYVNVDKEEWKLETLCDLYETLAITQSVIFVNTRRKVDWLTDKMRTRDHTVSATHGDMDQNTRDIIMREFRSGSSRVLITTDLLARGIDVQQVSLVINYDLPTQPENYLHRIGRSGRFGRKGVAINFVIKDDERMLSDIQRFYNVVIEELPANVADLL</sequence>
<proteinExistence type="evidence at transcript level"/>
<accession>Q40470</accession>
<organism>
    <name type="scientific">Nicotiana tabacum</name>
    <name type="common">Common tobacco</name>
    <dbReference type="NCBI Taxonomy" id="4097"/>
    <lineage>
        <taxon>Eukaryota</taxon>
        <taxon>Viridiplantae</taxon>
        <taxon>Streptophyta</taxon>
        <taxon>Embryophyta</taxon>
        <taxon>Tracheophyta</taxon>
        <taxon>Spermatophyta</taxon>
        <taxon>Magnoliopsida</taxon>
        <taxon>eudicotyledons</taxon>
        <taxon>Gunneridae</taxon>
        <taxon>Pentapetalae</taxon>
        <taxon>asterids</taxon>
        <taxon>lamiids</taxon>
        <taxon>Solanales</taxon>
        <taxon>Solanaceae</taxon>
        <taxon>Nicotianoideae</taxon>
        <taxon>Nicotianeae</taxon>
        <taxon>Nicotiana</taxon>
    </lineage>
</organism>